<gene>
    <name evidence="1" type="primary">ispD</name>
    <name type="ordered locus">Cphy_0353</name>
</gene>
<feature type="chain" id="PRO_1000075930" description="2-C-methyl-D-erythritol 4-phosphate cytidylyltransferase">
    <location>
        <begin position="1"/>
        <end position="233"/>
    </location>
</feature>
<feature type="site" description="Transition state stabilizer" evidence="1">
    <location>
        <position position="16"/>
    </location>
</feature>
<feature type="site" description="Transition state stabilizer" evidence="1">
    <location>
        <position position="23"/>
    </location>
</feature>
<feature type="site" description="Positions MEP for the nucleophilic attack" evidence="1">
    <location>
        <position position="154"/>
    </location>
</feature>
<feature type="site" description="Positions MEP for the nucleophilic attack" evidence="1">
    <location>
        <position position="212"/>
    </location>
</feature>
<reference key="1">
    <citation type="submission" date="2007-11" db="EMBL/GenBank/DDBJ databases">
        <title>Complete genome sequence of Clostridium phytofermentans ISDg.</title>
        <authorList>
            <person name="Leschine S.B."/>
            <person name="Warnick T.A."/>
            <person name="Blanchard J.L."/>
            <person name="Schnell D.J."/>
            <person name="Petit E.L."/>
            <person name="LaTouf W.G."/>
            <person name="Copeland A."/>
            <person name="Lucas S."/>
            <person name="Lapidus A."/>
            <person name="Barry K."/>
            <person name="Glavina del Rio T."/>
            <person name="Dalin E."/>
            <person name="Tice H."/>
            <person name="Pitluck S."/>
            <person name="Kiss H."/>
            <person name="Brettin T."/>
            <person name="Bruce D."/>
            <person name="Detter J.C."/>
            <person name="Han C."/>
            <person name="Kuske C."/>
            <person name="Schmutz J."/>
            <person name="Larimer F."/>
            <person name="Land M."/>
            <person name="Hauser L."/>
            <person name="Kyrpides N."/>
            <person name="Kim E.A."/>
            <person name="Richardson P."/>
        </authorList>
    </citation>
    <scope>NUCLEOTIDE SEQUENCE [LARGE SCALE GENOMIC DNA]</scope>
    <source>
        <strain>ATCC 700394 / DSM 18823 / ISDg</strain>
    </source>
</reference>
<dbReference type="EC" id="2.7.7.60" evidence="1"/>
<dbReference type="EMBL" id="CP000885">
    <property type="protein sequence ID" value="ABX40740.1"/>
    <property type="molecule type" value="Genomic_DNA"/>
</dbReference>
<dbReference type="RefSeq" id="WP_012198383.1">
    <property type="nucleotide sequence ID" value="NC_010001.1"/>
</dbReference>
<dbReference type="SMR" id="A9KSU6"/>
<dbReference type="STRING" id="357809.Cphy_0353"/>
<dbReference type="KEGG" id="cpy:Cphy_0353"/>
<dbReference type="eggNOG" id="COG1211">
    <property type="taxonomic scope" value="Bacteria"/>
</dbReference>
<dbReference type="HOGENOM" id="CLU_061281_2_2_9"/>
<dbReference type="OrthoDB" id="9806837at2"/>
<dbReference type="UniPathway" id="UPA00056">
    <property type="reaction ID" value="UER00093"/>
</dbReference>
<dbReference type="Proteomes" id="UP000000370">
    <property type="component" value="Chromosome"/>
</dbReference>
<dbReference type="GO" id="GO:0050518">
    <property type="term" value="F:2-C-methyl-D-erythritol 4-phosphate cytidylyltransferase activity"/>
    <property type="evidence" value="ECO:0007669"/>
    <property type="project" value="UniProtKB-UniRule"/>
</dbReference>
<dbReference type="GO" id="GO:0019288">
    <property type="term" value="P:isopentenyl diphosphate biosynthetic process, methylerythritol 4-phosphate pathway"/>
    <property type="evidence" value="ECO:0007669"/>
    <property type="project" value="UniProtKB-UniRule"/>
</dbReference>
<dbReference type="CDD" id="cd02516">
    <property type="entry name" value="CDP-ME_synthetase"/>
    <property type="match status" value="1"/>
</dbReference>
<dbReference type="FunFam" id="3.90.550.10:FF:000003">
    <property type="entry name" value="2-C-methyl-D-erythritol 4-phosphate cytidylyltransferase"/>
    <property type="match status" value="1"/>
</dbReference>
<dbReference type="Gene3D" id="3.90.550.10">
    <property type="entry name" value="Spore Coat Polysaccharide Biosynthesis Protein SpsA, Chain A"/>
    <property type="match status" value="1"/>
</dbReference>
<dbReference type="HAMAP" id="MF_00108">
    <property type="entry name" value="IspD"/>
    <property type="match status" value="1"/>
</dbReference>
<dbReference type="InterPro" id="IPR001228">
    <property type="entry name" value="IspD"/>
</dbReference>
<dbReference type="InterPro" id="IPR034683">
    <property type="entry name" value="IspD/TarI"/>
</dbReference>
<dbReference type="InterPro" id="IPR050088">
    <property type="entry name" value="IspD/TarI_cytidylyltransf_bact"/>
</dbReference>
<dbReference type="InterPro" id="IPR018294">
    <property type="entry name" value="ISPD_synthase_CS"/>
</dbReference>
<dbReference type="InterPro" id="IPR029044">
    <property type="entry name" value="Nucleotide-diphossugar_trans"/>
</dbReference>
<dbReference type="NCBIfam" id="TIGR00453">
    <property type="entry name" value="ispD"/>
    <property type="match status" value="1"/>
</dbReference>
<dbReference type="PANTHER" id="PTHR32125">
    <property type="entry name" value="2-C-METHYL-D-ERYTHRITOL 4-PHOSPHATE CYTIDYLYLTRANSFERASE, CHLOROPLASTIC"/>
    <property type="match status" value="1"/>
</dbReference>
<dbReference type="PANTHER" id="PTHR32125:SF4">
    <property type="entry name" value="2-C-METHYL-D-ERYTHRITOL 4-PHOSPHATE CYTIDYLYLTRANSFERASE, CHLOROPLASTIC"/>
    <property type="match status" value="1"/>
</dbReference>
<dbReference type="Pfam" id="PF01128">
    <property type="entry name" value="IspD"/>
    <property type="match status" value="1"/>
</dbReference>
<dbReference type="SUPFAM" id="SSF53448">
    <property type="entry name" value="Nucleotide-diphospho-sugar transferases"/>
    <property type="match status" value="1"/>
</dbReference>
<dbReference type="PROSITE" id="PS01295">
    <property type="entry name" value="ISPD"/>
    <property type="match status" value="1"/>
</dbReference>
<evidence type="ECO:0000255" key="1">
    <source>
        <dbReference type="HAMAP-Rule" id="MF_00108"/>
    </source>
</evidence>
<organism>
    <name type="scientific">Lachnoclostridium phytofermentans (strain ATCC 700394 / DSM 18823 / ISDg)</name>
    <name type="common">Clostridium phytofermentans</name>
    <dbReference type="NCBI Taxonomy" id="357809"/>
    <lineage>
        <taxon>Bacteria</taxon>
        <taxon>Bacillati</taxon>
        <taxon>Bacillota</taxon>
        <taxon>Clostridia</taxon>
        <taxon>Lachnospirales</taxon>
        <taxon>Lachnospiraceae</taxon>
    </lineage>
</organism>
<name>ISPD_LACP7</name>
<comment type="function">
    <text evidence="1">Catalyzes the formation of 4-diphosphocytidyl-2-C-methyl-D-erythritol from CTP and 2-C-methyl-D-erythritol 4-phosphate (MEP).</text>
</comment>
<comment type="catalytic activity">
    <reaction evidence="1">
        <text>2-C-methyl-D-erythritol 4-phosphate + CTP + H(+) = 4-CDP-2-C-methyl-D-erythritol + diphosphate</text>
        <dbReference type="Rhea" id="RHEA:13429"/>
        <dbReference type="ChEBI" id="CHEBI:15378"/>
        <dbReference type="ChEBI" id="CHEBI:33019"/>
        <dbReference type="ChEBI" id="CHEBI:37563"/>
        <dbReference type="ChEBI" id="CHEBI:57823"/>
        <dbReference type="ChEBI" id="CHEBI:58262"/>
        <dbReference type="EC" id="2.7.7.60"/>
    </reaction>
</comment>
<comment type="pathway">
    <text evidence="1">Isoprenoid biosynthesis; isopentenyl diphosphate biosynthesis via DXP pathway; isopentenyl diphosphate from 1-deoxy-D-xylulose 5-phosphate: step 2/6.</text>
</comment>
<comment type="similarity">
    <text evidence="1">Belongs to the IspD/TarI cytidylyltransferase family. IspD subfamily.</text>
</comment>
<keyword id="KW-0414">Isoprene biosynthesis</keyword>
<keyword id="KW-0548">Nucleotidyltransferase</keyword>
<keyword id="KW-1185">Reference proteome</keyword>
<keyword id="KW-0808">Transferase</keyword>
<accession>A9KSU6</accession>
<proteinExistence type="inferred from homology"/>
<sequence>MEKVTAIVLAAGQGKRMKSSVSKQYMLLKDKPVLYYSLKAFENSLVTDIIVVVGNDEISYVKEEIIKPYGFRKVTHVVEGGSERYLSVLNGLNKIKDSDYVLVHDGARPLIKTNTINTVISEVEEKKACIVGVASKDTVKISTHDGIIDSTPDRNQVYTIQTPQAFEYSILREAYDNLASYQGAMITDDAMIVECLNRYPIYLVQGEYTNIKITTPEDLIFAEAILREHQDFI</sequence>
<protein>
    <recommendedName>
        <fullName evidence="1">2-C-methyl-D-erythritol 4-phosphate cytidylyltransferase</fullName>
        <ecNumber evidence="1">2.7.7.60</ecNumber>
    </recommendedName>
    <alternativeName>
        <fullName evidence="1">4-diphosphocytidyl-2C-methyl-D-erythritol synthase</fullName>
    </alternativeName>
    <alternativeName>
        <fullName evidence="1">MEP cytidylyltransferase</fullName>
        <shortName evidence="1">MCT</shortName>
    </alternativeName>
</protein>